<keyword id="KW-0030">Aminoacyl-tRNA synthetase</keyword>
<keyword id="KW-0067">ATP-binding</keyword>
<keyword id="KW-0963">Cytoplasm</keyword>
<keyword id="KW-0436">Ligase</keyword>
<keyword id="KW-0547">Nucleotide-binding</keyword>
<keyword id="KW-0648">Protein biosynthesis</keyword>
<keyword id="KW-1185">Reference proteome</keyword>
<proteinExistence type="inferred from homology"/>
<reference key="1">
    <citation type="submission" date="2006-06" db="EMBL/GenBank/DDBJ databases">
        <title>Complete sequence of Rubrobacter xylanophilus DSM 9941.</title>
        <authorList>
            <consortium name="US DOE Joint Genome Institute"/>
            <person name="Copeland A."/>
            <person name="Lucas S."/>
            <person name="Lapidus A."/>
            <person name="Barry K."/>
            <person name="Detter J.C."/>
            <person name="Glavina del Rio T."/>
            <person name="Hammon N."/>
            <person name="Israni S."/>
            <person name="Dalin E."/>
            <person name="Tice H."/>
            <person name="Pitluck S."/>
            <person name="Munk A.C."/>
            <person name="Brettin T."/>
            <person name="Bruce D."/>
            <person name="Han C."/>
            <person name="Tapia R."/>
            <person name="Gilna P."/>
            <person name="Schmutz J."/>
            <person name="Larimer F."/>
            <person name="Land M."/>
            <person name="Hauser L."/>
            <person name="Kyrpides N."/>
            <person name="Lykidis A."/>
            <person name="da Costa M.S."/>
            <person name="Rainey F.A."/>
            <person name="Empadinhas N."/>
            <person name="Jolivet E."/>
            <person name="Battista J.R."/>
            <person name="Richardson P."/>
        </authorList>
    </citation>
    <scope>NUCLEOTIDE SEQUENCE [LARGE SCALE GENOMIC DNA]</scope>
    <source>
        <strain>DSM 9941 / JCM 11954 / NBRC 16129 / PRD-1</strain>
    </source>
</reference>
<gene>
    <name evidence="1" type="primary">leuS</name>
    <name type="ordered locus">Rxyl_3202</name>
</gene>
<sequence length="817" mass="93833">MSETFAKRASRRGYDPRAIEERWQRRWAETGLYKTDEDPSKPKHYALTMLPYPSGDLHVGHWYAMTPSDTRARFMRMRGYRVFFPIGFDAFGLPAENAAIKRGIHPRDWTYSNIERMRGQLRQMGTMFDFDAEVVTCDPEYYRWNQWFFLKFYEKGLAYREKAPVDWCPSCNTTLAREQVVGPDRRCERCDTPVIKRNLAQWLFKITDYAEELLDFSEIEWPERVKALQRNWIGRSEGAEIEFEIEGYGGVTVFTTRPDTLFGATFFVVAPEHPAVESITTPERGEEVRAYVERAARMSEIDRADVTREKTGVFTGAYAVNPANGERIPVYVADYVLMGYGTGAIMAVPAHDERDFEFAKKHGIEIRTVIAPPDWDGSPLERAYVGEGQMVNSGPFDGTPSAEGREKVTGWLRERGVGRPAVNYRLRDWLISRQRYWGTPIPIVYCERCGTVPVPEEDLPVLLPEDAEFMPTGESPLKFNDEFRKTECPRCGGPAERETDTMDTFVDSSWYQYRYLSPHYEEGPFDPERGSRWLPVDQYTGGIEHATMHLLYTRFFTKVMRDLGLVDFDEPMLRLFNQGVILGPDGNRMSKSRGNVVNPQEYVDRYGSDVLRCYLMFIGPWDEGGPWDPGGIEGVARWLRRAFTLVAGGDVSEAEADPGELSRRTHRLVKRVTEYLEGFRFNTAIAALMEHTNYLLAVKGEVGEEEWREAMRSFLLVLAPFAPHHAEEMWEILGEEYSVHEQGWPSWDEELVREETVTLVVQVNGKLRDRVEAPAGVDEGRARELALSSERVRAHVEGRELRKTVYVPGRLINLVVS</sequence>
<accession>Q1AR71</accession>
<feature type="chain" id="PRO_0000334808" description="Leucine--tRNA ligase">
    <location>
        <begin position="1"/>
        <end position="817"/>
    </location>
</feature>
<feature type="short sequence motif" description="'HIGH' region">
    <location>
        <begin position="51"/>
        <end position="61"/>
    </location>
</feature>
<feature type="short sequence motif" description="'KMSKS' region">
    <location>
        <begin position="588"/>
        <end position="592"/>
    </location>
</feature>
<feature type="binding site" evidence="1">
    <location>
        <position position="591"/>
    </location>
    <ligand>
        <name>ATP</name>
        <dbReference type="ChEBI" id="CHEBI:30616"/>
    </ligand>
</feature>
<dbReference type="EC" id="6.1.1.4" evidence="1"/>
<dbReference type="EMBL" id="CP000386">
    <property type="protein sequence ID" value="ABG06107.1"/>
    <property type="molecule type" value="Genomic_DNA"/>
</dbReference>
<dbReference type="RefSeq" id="WP_011566112.1">
    <property type="nucleotide sequence ID" value="NC_008148.1"/>
</dbReference>
<dbReference type="SMR" id="Q1AR71"/>
<dbReference type="STRING" id="266117.Rxyl_3202"/>
<dbReference type="KEGG" id="rxy:Rxyl_3202"/>
<dbReference type="eggNOG" id="COG0495">
    <property type="taxonomic scope" value="Bacteria"/>
</dbReference>
<dbReference type="HOGENOM" id="CLU_004427_0_0_11"/>
<dbReference type="OrthoDB" id="9810365at2"/>
<dbReference type="PhylomeDB" id="Q1AR71"/>
<dbReference type="Proteomes" id="UP000006637">
    <property type="component" value="Chromosome"/>
</dbReference>
<dbReference type="GO" id="GO:0005829">
    <property type="term" value="C:cytosol"/>
    <property type="evidence" value="ECO:0007669"/>
    <property type="project" value="TreeGrafter"/>
</dbReference>
<dbReference type="GO" id="GO:0002161">
    <property type="term" value="F:aminoacyl-tRNA deacylase activity"/>
    <property type="evidence" value="ECO:0007669"/>
    <property type="project" value="InterPro"/>
</dbReference>
<dbReference type="GO" id="GO:0005524">
    <property type="term" value="F:ATP binding"/>
    <property type="evidence" value="ECO:0007669"/>
    <property type="project" value="UniProtKB-UniRule"/>
</dbReference>
<dbReference type="GO" id="GO:0004823">
    <property type="term" value="F:leucine-tRNA ligase activity"/>
    <property type="evidence" value="ECO:0007669"/>
    <property type="project" value="UniProtKB-UniRule"/>
</dbReference>
<dbReference type="GO" id="GO:0006429">
    <property type="term" value="P:leucyl-tRNA aminoacylation"/>
    <property type="evidence" value="ECO:0007669"/>
    <property type="project" value="UniProtKB-UniRule"/>
</dbReference>
<dbReference type="CDD" id="cd07958">
    <property type="entry name" value="Anticodon_Ia_Leu_BEm"/>
    <property type="match status" value="1"/>
</dbReference>
<dbReference type="CDD" id="cd00812">
    <property type="entry name" value="LeuRS_core"/>
    <property type="match status" value="1"/>
</dbReference>
<dbReference type="FunFam" id="1.10.730.10:FF:000002">
    <property type="entry name" value="Leucine--tRNA ligase"/>
    <property type="match status" value="1"/>
</dbReference>
<dbReference type="FunFam" id="3.40.50.620:FF:000003">
    <property type="entry name" value="Leucine--tRNA ligase"/>
    <property type="match status" value="1"/>
</dbReference>
<dbReference type="FunFam" id="3.40.50.620:FF:000056">
    <property type="entry name" value="Leucine--tRNA ligase"/>
    <property type="match status" value="1"/>
</dbReference>
<dbReference type="Gene3D" id="3.10.20.590">
    <property type="match status" value="1"/>
</dbReference>
<dbReference type="Gene3D" id="3.40.50.620">
    <property type="entry name" value="HUPs"/>
    <property type="match status" value="2"/>
</dbReference>
<dbReference type="Gene3D" id="1.10.730.10">
    <property type="entry name" value="Isoleucyl-tRNA Synthetase, Domain 1"/>
    <property type="match status" value="1"/>
</dbReference>
<dbReference type="HAMAP" id="MF_00049_B">
    <property type="entry name" value="Leu_tRNA_synth_B"/>
    <property type="match status" value="1"/>
</dbReference>
<dbReference type="InterPro" id="IPR002300">
    <property type="entry name" value="aa-tRNA-synth_Ia"/>
</dbReference>
<dbReference type="InterPro" id="IPR002302">
    <property type="entry name" value="Leu-tRNA-ligase"/>
</dbReference>
<dbReference type="InterPro" id="IPR025709">
    <property type="entry name" value="Leu_tRNA-synth_edit"/>
</dbReference>
<dbReference type="InterPro" id="IPR013155">
    <property type="entry name" value="M/V/L/I-tRNA-synth_anticd-bd"/>
</dbReference>
<dbReference type="InterPro" id="IPR014729">
    <property type="entry name" value="Rossmann-like_a/b/a_fold"/>
</dbReference>
<dbReference type="InterPro" id="IPR009080">
    <property type="entry name" value="tRNAsynth_Ia_anticodon-bd"/>
</dbReference>
<dbReference type="InterPro" id="IPR009008">
    <property type="entry name" value="Val/Leu/Ile-tRNA-synth_edit"/>
</dbReference>
<dbReference type="NCBIfam" id="TIGR00396">
    <property type="entry name" value="leuS_bact"/>
    <property type="match status" value="1"/>
</dbReference>
<dbReference type="PANTHER" id="PTHR43740:SF2">
    <property type="entry name" value="LEUCINE--TRNA LIGASE, MITOCHONDRIAL"/>
    <property type="match status" value="1"/>
</dbReference>
<dbReference type="PANTHER" id="PTHR43740">
    <property type="entry name" value="LEUCYL-TRNA SYNTHETASE"/>
    <property type="match status" value="1"/>
</dbReference>
<dbReference type="Pfam" id="PF08264">
    <property type="entry name" value="Anticodon_1"/>
    <property type="match status" value="1"/>
</dbReference>
<dbReference type="Pfam" id="PF00133">
    <property type="entry name" value="tRNA-synt_1"/>
    <property type="match status" value="2"/>
</dbReference>
<dbReference type="Pfam" id="PF13603">
    <property type="entry name" value="tRNA-synt_1_2"/>
    <property type="match status" value="1"/>
</dbReference>
<dbReference type="PRINTS" id="PR00985">
    <property type="entry name" value="TRNASYNTHLEU"/>
</dbReference>
<dbReference type="SUPFAM" id="SSF47323">
    <property type="entry name" value="Anticodon-binding domain of a subclass of class I aminoacyl-tRNA synthetases"/>
    <property type="match status" value="1"/>
</dbReference>
<dbReference type="SUPFAM" id="SSF52374">
    <property type="entry name" value="Nucleotidylyl transferase"/>
    <property type="match status" value="1"/>
</dbReference>
<dbReference type="SUPFAM" id="SSF50677">
    <property type="entry name" value="ValRS/IleRS/LeuRS editing domain"/>
    <property type="match status" value="1"/>
</dbReference>
<name>SYL_RUBXD</name>
<organism>
    <name type="scientific">Rubrobacter xylanophilus (strain DSM 9941 / JCM 11954 / NBRC 16129 / PRD-1)</name>
    <dbReference type="NCBI Taxonomy" id="266117"/>
    <lineage>
        <taxon>Bacteria</taxon>
        <taxon>Bacillati</taxon>
        <taxon>Actinomycetota</taxon>
        <taxon>Rubrobacteria</taxon>
        <taxon>Rubrobacterales</taxon>
        <taxon>Rubrobacteraceae</taxon>
        <taxon>Rubrobacter</taxon>
    </lineage>
</organism>
<comment type="catalytic activity">
    <reaction evidence="1">
        <text>tRNA(Leu) + L-leucine + ATP = L-leucyl-tRNA(Leu) + AMP + diphosphate</text>
        <dbReference type="Rhea" id="RHEA:11688"/>
        <dbReference type="Rhea" id="RHEA-COMP:9613"/>
        <dbReference type="Rhea" id="RHEA-COMP:9622"/>
        <dbReference type="ChEBI" id="CHEBI:30616"/>
        <dbReference type="ChEBI" id="CHEBI:33019"/>
        <dbReference type="ChEBI" id="CHEBI:57427"/>
        <dbReference type="ChEBI" id="CHEBI:78442"/>
        <dbReference type="ChEBI" id="CHEBI:78494"/>
        <dbReference type="ChEBI" id="CHEBI:456215"/>
        <dbReference type="EC" id="6.1.1.4"/>
    </reaction>
</comment>
<comment type="subcellular location">
    <subcellularLocation>
        <location evidence="1">Cytoplasm</location>
    </subcellularLocation>
</comment>
<comment type="similarity">
    <text evidence="1">Belongs to the class-I aminoacyl-tRNA synthetase family.</text>
</comment>
<evidence type="ECO:0000255" key="1">
    <source>
        <dbReference type="HAMAP-Rule" id="MF_00049"/>
    </source>
</evidence>
<protein>
    <recommendedName>
        <fullName evidence="1">Leucine--tRNA ligase</fullName>
        <ecNumber evidence="1">6.1.1.4</ecNumber>
    </recommendedName>
    <alternativeName>
        <fullName evidence="1">Leucyl-tRNA synthetase</fullName>
        <shortName evidence="1">LeuRS</shortName>
    </alternativeName>
</protein>